<dbReference type="EC" id="2.5.1.157" evidence="7"/>
<dbReference type="EMBL" id="U43491">
    <property type="protein sequence ID" value="AAC49486.1"/>
    <property type="molecule type" value="Genomic_DNA"/>
</dbReference>
<dbReference type="EMBL" id="Z74914">
    <property type="protein sequence ID" value="CAA99194.1"/>
    <property type="molecule type" value="Genomic_DNA"/>
</dbReference>
<dbReference type="EMBL" id="BK006948">
    <property type="protein sequence ID" value="DAA10788.1"/>
    <property type="molecule type" value="Genomic_DNA"/>
</dbReference>
<dbReference type="PIR" id="S61990">
    <property type="entry name" value="S61990"/>
</dbReference>
<dbReference type="RefSeq" id="NP_014648.1">
    <property type="nucleotide sequence ID" value="NM_001183425.1"/>
</dbReference>
<dbReference type="SMR" id="Q12094"/>
<dbReference type="BioGRID" id="34409">
    <property type="interactions" value="171"/>
</dbReference>
<dbReference type="DIP" id="DIP-1251N"/>
<dbReference type="FunCoup" id="Q12094">
    <property type="interactions" value="932"/>
</dbReference>
<dbReference type="IntAct" id="Q12094">
    <property type="interactions" value="32"/>
</dbReference>
<dbReference type="MINT" id="Q12094"/>
<dbReference type="STRING" id="4932.YOR006C"/>
<dbReference type="iPTMnet" id="Q12094"/>
<dbReference type="PaxDb" id="4932-YOR006C"/>
<dbReference type="PeptideAtlas" id="Q12094"/>
<dbReference type="EnsemblFungi" id="YOR006C_mRNA">
    <property type="protein sequence ID" value="YOR006C"/>
    <property type="gene ID" value="YOR006C"/>
</dbReference>
<dbReference type="GeneID" id="854167"/>
<dbReference type="KEGG" id="sce:YOR006C"/>
<dbReference type="AGR" id="SGD:S000005532"/>
<dbReference type="SGD" id="S000005532">
    <property type="gene designation" value="TSR3"/>
</dbReference>
<dbReference type="VEuPathDB" id="FungiDB:YOR006C"/>
<dbReference type="eggNOG" id="KOG3154">
    <property type="taxonomic scope" value="Eukaryota"/>
</dbReference>
<dbReference type="GeneTree" id="ENSGT00390000014665"/>
<dbReference type="HOGENOM" id="CLU_035060_0_0_1"/>
<dbReference type="InParanoid" id="Q12094"/>
<dbReference type="OMA" id="HHIRKGR"/>
<dbReference type="OrthoDB" id="10262062at2759"/>
<dbReference type="BioCyc" id="MetaCyc:G3O-33556-MONOMER"/>
<dbReference type="BioCyc" id="YEAST:G3O-33556-MONOMER"/>
<dbReference type="BioGRID-ORCS" id="854167">
    <property type="hits" value="0 hits in 10 CRISPR screens"/>
</dbReference>
<dbReference type="PRO" id="PR:Q12094"/>
<dbReference type="Proteomes" id="UP000002311">
    <property type="component" value="Chromosome XV"/>
</dbReference>
<dbReference type="RNAct" id="Q12094">
    <property type="molecule type" value="protein"/>
</dbReference>
<dbReference type="GO" id="GO:0005737">
    <property type="term" value="C:cytoplasm"/>
    <property type="evidence" value="ECO:0000314"/>
    <property type="project" value="SGD"/>
</dbReference>
<dbReference type="GO" id="GO:0005634">
    <property type="term" value="C:nucleus"/>
    <property type="evidence" value="ECO:0007005"/>
    <property type="project" value="SGD"/>
</dbReference>
<dbReference type="GO" id="GO:0005777">
    <property type="term" value="C:peroxisome"/>
    <property type="evidence" value="ECO:0000314"/>
    <property type="project" value="SGD"/>
</dbReference>
<dbReference type="GO" id="GO:0106388">
    <property type="term" value="F:18S rRNA aminocarboxypropyltransferase activity"/>
    <property type="evidence" value="ECO:0000315"/>
    <property type="project" value="SGD"/>
</dbReference>
<dbReference type="GO" id="GO:1904047">
    <property type="term" value="F:S-adenosyl-L-methionine binding"/>
    <property type="evidence" value="ECO:0007669"/>
    <property type="project" value="UniProtKB-UniRule"/>
</dbReference>
<dbReference type="GO" id="GO:0000455">
    <property type="term" value="P:enzyme-directed rRNA pseudouridine synthesis"/>
    <property type="evidence" value="ECO:0000314"/>
    <property type="project" value="UniProtKB"/>
</dbReference>
<dbReference type="GO" id="GO:0030490">
    <property type="term" value="P:maturation of SSU-rRNA"/>
    <property type="evidence" value="ECO:0000315"/>
    <property type="project" value="SGD"/>
</dbReference>
<dbReference type="HAMAP" id="MF_01116">
    <property type="entry name" value="TSR3"/>
    <property type="match status" value="1"/>
</dbReference>
<dbReference type="InterPro" id="IPR007209">
    <property type="entry name" value="RNaseL-inhib-like_metal-bd_dom"/>
</dbReference>
<dbReference type="InterPro" id="IPR022968">
    <property type="entry name" value="Tsr3-like"/>
</dbReference>
<dbReference type="InterPro" id="IPR007177">
    <property type="entry name" value="Tsr3_C"/>
</dbReference>
<dbReference type="NCBIfam" id="NF002621">
    <property type="entry name" value="PRK02287.1"/>
    <property type="match status" value="1"/>
</dbReference>
<dbReference type="PANTHER" id="PTHR20426:SF0">
    <property type="entry name" value="18S RRNA AMINOCARBOXYPROPYLTRANSFERASE"/>
    <property type="match status" value="1"/>
</dbReference>
<dbReference type="PANTHER" id="PTHR20426">
    <property type="entry name" value="RIBOSOME BIOGENESIS PROTEIN TSR3 HOMOLOG"/>
    <property type="match status" value="1"/>
</dbReference>
<dbReference type="Pfam" id="PF04068">
    <property type="entry name" value="Fer4_RLI"/>
    <property type="match status" value="1"/>
</dbReference>
<dbReference type="Pfam" id="PF04034">
    <property type="entry name" value="Ribo_biogen_C"/>
    <property type="match status" value="1"/>
</dbReference>
<protein>
    <recommendedName>
        <fullName evidence="9">18S rRNA aminocarboxypropyltransferase</fullName>
        <ecNumber evidence="7">2.5.1.157</ecNumber>
    </recommendedName>
    <alternativeName>
        <fullName evidence="8">20S rRNA accumulation protein 3</fullName>
        <shortName evidence="8">ScTsr3</shortName>
    </alternativeName>
</protein>
<evidence type="ECO:0000250" key="1">
    <source>
        <dbReference type="UniProtKB" id="E1QU22"/>
    </source>
</evidence>
<evidence type="ECO:0000255" key="2">
    <source>
        <dbReference type="HAMAP-Rule" id="MF_03146"/>
    </source>
</evidence>
<evidence type="ECO:0000256" key="3">
    <source>
        <dbReference type="SAM" id="MobiDB-lite"/>
    </source>
</evidence>
<evidence type="ECO:0000269" key="4">
    <source>
    </source>
</evidence>
<evidence type="ECO:0000269" key="5">
    <source>
    </source>
</evidence>
<evidence type="ECO:0000269" key="6">
    <source>
    </source>
</evidence>
<evidence type="ECO:0000269" key="7">
    <source>
    </source>
</evidence>
<evidence type="ECO:0000303" key="8">
    <source>
    </source>
</evidence>
<evidence type="ECO:0000305" key="9"/>
<evidence type="ECO:0007744" key="10">
    <source>
    </source>
</evidence>
<feature type="chain" id="PRO_0000094426" description="18S rRNA aminocarboxypropyltransferase">
    <location>
        <begin position="1"/>
        <end position="313"/>
    </location>
</feature>
<feature type="region of interest" description="Disordered" evidence="3">
    <location>
        <begin position="1"/>
        <end position="30"/>
    </location>
</feature>
<feature type="region of interest" description="Disordered" evidence="3">
    <location>
        <begin position="215"/>
        <end position="313"/>
    </location>
</feature>
<feature type="compositionally biased region" description="Basic and acidic residues" evidence="3">
    <location>
        <begin position="215"/>
        <end position="228"/>
    </location>
</feature>
<feature type="compositionally biased region" description="Polar residues" evidence="3">
    <location>
        <begin position="237"/>
        <end position="246"/>
    </location>
</feature>
<feature type="compositionally biased region" description="Acidic residues" evidence="3">
    <location>
        <begin position="247"/>
        <end position="257"/>
    </location>
</feature>
<feature type="binding site" evidence="1">
    <location>
        <position position="62"/>
    </location>
    <ligand>
        <name>S-adenosyl-L-methionine</name>
        <dbReference type="ChEBI" id="CHEBI:59789"/>
    </ligand>
</feature>
<feature type="binding site" evidence="1">
    <location>
        <position position="110"/>
    </location>
    <ligand>
        <name>S-adenosyl-L-methionine</name>
        <dbReference type="ChEBI" id="CHEBI:59789"/>
    </ligand>
</feature>
<feature type="binding site" evidence="1">
    <location>
        <position position="133"/>
    </location>
    <ligand>
        <name>S-adenosyl-L-methionine</name>
        <dbReference type="ChEBI" id="CHEBI:59789"/>
    </ligand>
</feature>
<feature type="binding site" evidence="1">
    <location>
        <position position="148"/>
    </location>
    <ligand>
        <name>S-adenosyl-L-methionine</name>
        <dbReference type="ChEBI" id="CHEBI:59789"/>
    </ligand>
</feature>
<feature type="modified residue" description="Phosphoserine" evidence="10">
    <location>
        <position position="286"/>
    </location>
</feature>
<feature type="modified residue" description="Phosphoserine" evidence="10">
    <location>
        <position position="289"/>
    </location>
</feature>
<feature type="mutagenesis site" description="Decreased aminocarboxypropyltransferase activity; when associated with A-65 and A-131." evidence="7">
    <original>R</original>
    <variation>A</variation>
    <location>
        <position position="60"/>
    </location>
</feature>
<feature type="mutagenesis site" description="Does not affect S-adenosyl-L-methionine-binding." evidence="7">
    <original>S</original>
    <variation>A</variation>
    <location>
        <position position="62"/>
    </location>
</feature>
<feature type="mutagenesis site" description="Decreased S-adenosyl-L-methionine-binding." evidence="7">
    <original>S</original>
    <variation>D</variation>
    <location>
        <position position="62"/>
    </location>
</feature>
<feature type="mutagenesis site" description="Decreased aminocarboxypropyltransferase activity; when associated with A-60 and A-131." evidence="7">
    <original>K</original>
    <variation>A</variation>
    <location>
        <position position="65"/>
    </location>
</feature>
<feature type="mutagenesis site" description="Reduced aminocarboxypropyltransferase activity." evidence="7">
    <original>E</original>
    <variation>A</variation>
    <location>
        <position position="111"/>
    </location>
</feature>
<feature type="mutagenesis site" description="Decreased aminocarboxypropyltransferase activity; when associated with A-60 and A-65." evidence="7">
    <original>R</original>
    <variation>A</variation>
    <location>
        <position position="131"/>
    </location>
</feature>
<proteinExistence type="evidence at protein level"/>
<name>TSR3_YEAST</name>
<comment type="function">
    <text evidence="6 7">Aminocarboxypropyltransferase that catalyzes the aminocarboxypropyl transfer on pseudouridine at position 1191 (Psi1191) in 18S rRNA (PubMed:27084949). It constitutes the last step in biosynthesis of the hypermodified N1-methyl-N3-(3-amino-3-carboxypropyl) pseudouridine (m1acp3-Psi) conserved in eukaryotic 18S rRNA (PubMed:27084949). Required for processing 35S pre-rRNA at site D (PubMed:19806183).</text>
</comment>
<comment type="catalytic activity">
    <reaction evidence="2 7">
        <text>an N(1)-methylpseudouridine in rRNA + S-adenosyl-L-methionine = N(1)-methyl-N(3)-[(3S)-3-amino-3-carboxypropyl]pseudouridine in rRNA + S-methyl-5'-thioadenosine + H(+)</text>
        <dbReference type="Rhea" id="RHEA:63296"/>
        <dbReference type="Rhea" id="RHEA-COMP:11634"/>
        <dbReference type="Rhea" id="RHEA-COMP:16310"/>
        <dbReference type="ChEBI" id="CHEBI:15378"/>
        <dbReference type="ChEBI" id="CHEBI:17509"/>
        <dbReference type="ChEBI" id="CHEBI:59789"/>
        <dbReference type="ChEBI" id="CHEBI:74890"/>
        <dbReference type="ChEBI" id="CHEBI:146234"/>
        <dbReference type="EC" id="2.5.1.157"/>
    </reaction>
    <physiologicalReaction direction="left-to-right" evidence="2 7">
        <dbReference type="Rhea" id="RHEA:63297"/>
    </physiologicalReaction>
</comment>
<comment type="catalytic activity">
    <reaction evidence="2 7">
        <text>N(1)-methylpseudouridine(1191) in yeast 18S rRNA + S-adenosyl-L-methionine = N(1)-methyl-N(3)-[(3S)-3-amino-3-carboxypropyl]pseudouridine(1191) in yeast 18S rRNA + S-methyl-5'-thioadenosine + H(+)</text>
        <dbReference type="Rhea" id="RHEA:63300"/>
        <dbReference type="Rhea" id="RHEA-COMP:13852"/>
        <dbReference type="Rhea" id="RHEA-COMP:16309"/>
        <dbReference type="ChEBI" id="CHEBI:15378"/>
        <dbReference type="ChEBI" id="CHEBI:17509"/>
        <dbReference type="ChEBI" id="CHEBI:59789"/>
        <dbReference type="ChEBI" id="CHEBI:74890"/>
        <dbReference type="ChEBI" id="CHEBI:146234"/>
    </reaction>
    <physiologicalReaction direction="left-to-right" evidence="2 7">
        <dbReference type="Rhea" id="RHEA:63301"/>
    </physiologicalReaction>
</comment>
<comment type="subcellular location">
    <subcellularLocation>
        <location evidence="2 4 7">Cytoplasm</location>
    </subcellularLocation>
    <subcellularLocation>
        <location evidence="2 4">Nucleus</location>
    </subcellularLocation>
</comment>
<comment type="disruption phenotype">
    <text evidence="7">Minor growth defect caused by late 18S rRNA processing defects, leading to a ribosomal subunit imbalance with a reduced 40S to 60S ratio.</text>
</comment>
<comment type="miscellaneous">
    <text evidence="5">Present with 3610 molecules/cell in log phase SD medium.</text>
</comment>
<comment type="similarity">
    <text evidence="2">Belongs to the TDD superfamily. TSR3 family.</text>
</comment>
<organism>
    <name type="scientific">Saccharomyces cerevisiae (strain ATCC 204508 / S288c)</name>
    <name type="common">Baker's yeast</name>
    <dbReference type="NCBI Taxonomy" id="559292"/>
    <lineage>
        <taxon>Eukaryota</taxon>
        <taxon>Fungi</taxon>
        <taxon>Dikarya</taxon>
        <taxon>Ascomycota</taxon>
        <taxon>Saccharomycotina</taxon>
        <taxon>Saccharomycetes</taxon>
        <taxon>Saccharomycetales</taxon>
        <taxon>Saccharomycetaceae</taxon>
        <taxon>Saccharomyces</taxon>
    </lineage>
</organism>
<sequence>MGKGKNKMHEPKNGRPQRGANGHSSRQNHRRMEMKYDNSEKMKFPVKLAMWDFDHCDPKRCSGKKLERLGLIKSLRVGQKFQGIVVSPNGKGVVCPDDLEIVEQHGASVVECSWARLEEVPFNKIGGKHERLLPYLVAANQVNYGRPWRLNCVEALAACFAIVGRMDWASELLSHFSWGMGFLELNKELLEIYQQCTDCDSVKRAEEEWLQKLEKETQERKSRAKEEDIWMMGNINRRGNGSQSDTSESEENSEQSDLEGNNQCIEYDSLGNAIRIDNMKSREAQSEESEDEESGSKENGEPLSYDPLGNLIR</sequence>
<gene>
    <name evidence="2 8" type="primary">TSR3</name>
    <name type="ordered locus">YOR006C</name>
    <name type="ORF">UND313</name>
</gene>
<accession>Q12094</accession>
<accession>D6W272</accession>
<reference key="1">
    <citation type="journal article" date="1996" name="Yeast">
        <title>The sequence of a 30 kb fragment on the left arm of chromosome XV from Saccharomyces cerevisiae reveals 15 open reading frames, five of which correspond to previously identified genes.</title>
        <authorList>
            <person name="Sterky F."/>
            <person name="Holmberg A."/>
            <person name="Pettersson B."/>
            <person name="Uhlen M."/>
        </authorList>
    </citation>
    <scope>NUCLEOTIDE SEQUENCE [GENOMIC DNA]</scope>
</reference>
<reference key="2">
    <citation type="journal article" date="1997" name="Nature">
        <title>The nucleotide sequence of Saccharomyces cerevisiae chromosome XV.</title>
        <authorList>
            <person name="Dujon B."/>
            <person name="Albermann K."/>
            <person name="Aldea M."/>
            <person name="Alexandraki D."/>
            <person name="Ansorge W."/>
            <person name="Arino J."/>
            <person name="Benes V."/>
            <person name="Bohn C."/>
            <person name="Bolotin-Fukuhara M."/>
            <person name="Bordonne R."/>
            <person name="Boyer J."/>
            <person name="Camasses A."/>
            <person name="Casamayor A."/>
            <person name="Casas C."/>
            <person name="Cheret G."/>
            <person name="Cziepluch C."/>
            <person name="Daignan-Fornier B."/>
            <person name="Dang V.-D."/>
            <person name="de Haan M."/>
            <person name="Delius H."/>
            <person name="Durand P."/>
            <person name="Fairhead C."/>
            <person name="Feldmann H."/>
            <person name="Gaillon L."/>
            <person name="Galisson F."/>
            <person name="Gamo F.-J."/>
            <person name="Gancedo C."/>
            <person name="Goffeau A."/>
            <person name="Goulding S.E."/>
            <person name="Grivell L.A."/>
            <person name="Habbig B."/>
            <person name="Hand N.J."/>
            <person name="Hani J."/>
            <person name="Hattenhorst U."/>
            <person name="Hebling U."/>
            <person name="Hernando Y."/>
            <person name="Herrero E."/>
            <person name="Heumann K."/>
            <person name="Hiesel R."/>
            <person name="Hilger F."/>
            <person name="Hofmann B."/>
            <person name="Hollenberg C.P."/>
            <person name="Hughes B."/>
            <person name="Jauniaux J.-C."/>
            <person name="Kalogeropoulos A."/>
            <person name="Katsoulou C."/>
            <person name="Kordes E."/>
            <person name="Lafuente M.J."/>
            <person name="Landt O."/>
            <person name="Louis E.J."/>
            <person name="Maarse A.C."/>
            <person name="Madania A."/>
            <person name="Mannhaupt G."/>
            <person name="Marck C."/>
            <person name="Martin R.P."/>
            <person name="Mewes H.-W."/>
            <person name="Michaux G."/>
            <person name="Paces V."/>
            <person name="Parle-McDermott A.G."/>
            <person name="Pearson B.M."/>
            <person name="Perrin A."/>
            <person name="Pettersson B."/>
            <person name="Poch O."/>
            <person name="Pohl T.M."/>
            <person name="Poirey R."/>
            <person name="Portetelle D."/>
            <person name="Pujol A."/>
            <person name="Purnelle B."/>
            <person name="Ramezani Rad M."/>
            <person name="Rechmann S."/>
            <person name="Schwager C."/>
            <person name="Schweizer M."/>
            <person name="Sor F."/>
            <person name="Sterky F."/>
            <person name="Tarassov I.A."/>
            <person name="Teodoru C."/>
            <person name="Tettelin H."/>
            <person name="Thierry A."/>
            <person name="Tobiasch E."/>
            <person name="Tzermia M."/>
            <person name="Uhlen M."/>
            <person name="Unseld M."/>
            <person name="Valens M."/>
            <person name="Vandenbol M."/>
            <person name="Vetter I."/>
            <person name="Vlcek C."/>
            <person name="Voet M."/>
            <person name="Volckaert G."/>
            <person name="Voss H."/>
            <person name="Wambutt R."/>
            <person name="Wedler H."/>
            <person name="Wiemann S."/>
            <person name="Winsor B."/>
            <person name="Wolfe K.H."/>
            <person name="Zollner A."/>
            <person name="Zumstein E."/>
            <person name="Kleine K."/>
        </authorList>
    </citation>
    <scope>NUCLEOTIDE SEQUENCE [LARGE SCALE GENOMIC DNA]</scope>
    <source>
        <strain>ATCC 204508 / S288c</strain>
    </source>
</reference>
<reference key="3">
    <citation type="journal article" date="2014" name="G3 (Bethesda)">
        <title>The reference genome sequence of Saccharomyces cerevisiae: Then and now.</title>
        <authorList>
            <person name="Engel S.R."/>
            <person name="Dietrich F.S."/>
            <person name="Fisk D.G."/>
            <person name="Binkley G."/>
            <person name="Balakrishnan R."/>
            <person name="Costanzo M.C."/>
            <person name="Dwight S.S."/>
            <person name="Hitz B.C."/>
            <person name="Karra K."/>
            <person name="Nash R.S."/>
            <person name="Weng S."/>
            <person name="Wong E.D."/>
            <person name="Lloyd P."/>
            <person name="Skrzypek M.S."/>
            <person name="Miyasato S.R."/>
            <person name="Simison M."/>
            <person name="Cherry J.M."/>
        </authorList>
    </citation>
    <scope>GENOME REANNOTATION</scope>
    <source>
        <strain>ATCC 204508 / S288c</strain>
    </source>
</reference>
<reference key="4">
    <citation type="journal article" date="2003" name="Nature">
        <title>Global analysis of protein localization in budding yeast.</title>
        <authorList>
            <person name="Huh W.-K."/>
            <person name="Falvo J.V."/>
            <person name="Gerke L.C."/>
            <person name="Carroll A.S."/>
            <person name="Howson R.W."/>
            <person name="Weissman J.S."/>
            <person name="O'Shea E.K."/>
        </authorList>
    </citation>
    <scope>SUBCELLULAR LOCATION [LARGE SCALE ANALYSIS]</scope>
</reference>
<reference key="5">
    <citation type="journal article" date="2003" name="Nature">
        <title>Global analysis of protein expression in yeast.</title>
        <authorList>
            <person name="Ghaemmaghami S."/>
            <person name="Huh W.-K."/>
            <person name="Bower K."/>
            <person name="Howson R.W."/>
            <person name="Belle A."/>
            <person name="Dephoure N."/>
            <person name="O'Shea E.K."/>
            <person name="Weissman J.S."/>
        </authorList>
    </citation>
    <scope>LEVEL OF PROTEIN EXPRESSION [LARGE SCALE ANALYSIS]</scope>
</reference>
<reference key="6">
    <citation type="journal article" date="2007" name="J. Proteome Res.">
        <title>Large-scale phosphorylation analysis of alpha-factor-arrested Saccharomyces cerevisiae.</title>
        <authorList>
            <person name="Li X."/>
            <person name="Gerber S.A."/>
            <person name="Rudner A.D."/>
            <person name="Beausoleil S.A."/>
            <person name="Haas W."/>
            <person name="Villen J."/>
            <person name="Elias J.E."/>
            <person name="Gygi S.P."/>
        </authorList>
    </citation>
    <scope>IDENTIFICATION BY MASS SPECTROMETRY [LARGE SCALE ANALYSIS]</scope>
    <source>
        <strain>ADR376</strain>
    </source>
</reference>
<reference key="7">
    <citation type="journal article" date="2009" name="PLoS Biol.">
        <title>Rational extension of the ribosome biogenesis pathway using network-guided genetics.</title>
        <authorList>
            <person name="Li Z."/>
            <person name="Lee I."/>
            <person name="Moradi E."/>
            <person name="Hung N.J."/>
            <person name="Johnson A.W."/>
            <person name="Marcotte E.M."/>
        </authorList>
    </citation>
    <scope>FUNCTION</scope>
</reference>
<reference key="8">
    <citation type="journal article" date="2009" name="Science">
        <title>Global analysis of Cdk1 substrate phosphorylation sites provides insights into evolution.</title>
        <authorList>
            <person name="Holt L.J."/>
            <person name="Tuch B.B."/>
            <person name="Villen J."/>
            <person name="Johnson A.D."/>
            <person name="Gygi S.P."/>
            <person name="Morgan D.O."/>
        </authorList>
    </citation>
    <scope>PHOSPHORYLATION [LARGE SCALE ANALYSIS] AT SER-286 AND SER-289</scope>
    <scope>IDENTIFICATION BY MASS SPECTROMETRY [LARGE SCALE ANALYSIS]</scope>
</reference>
<reference key="9">
    <citation type="journal article" date="2016" name="Nucleic Acids Res.">
        <title>Ribosome biogenesis factor Tsr3 is the aminocarboxypropyl transferase responsible for 18S rRNA hypermodification in yeast and humans.</title>
        <authorList>
            <person name="Meyer B."/>
            <person name="Wurm J.P."/>
            <person name="Sharma S."/>
            <person name="Immer C."/>
            <person name="Pogoryelov D."/>
            <person name="Koetter P."/>
            <person name="Lafontaine D.L."/>
            <person name="Woehnert J."/>
            <person name="Entian K.D."/>
        </authorList>
    </citation>
    <scope>FUNCTION</scope>
    <scope>CATALYTIC ACTIVITY</scope>
    <scope>SUBCELLULAR LOCATION</scope>
    <scope>DISRUPTION PHENOTYPE</scope>
    <scope>MUTAGENESIS OF ARG-60; SER-62; LYS-65; GLU-111 AND ARG-131</scope>
</reference>
<keyword id="KW-0963">Cytoplasm</keyword>
<keyword id="KW-0539">Nucleus</keyword>
<keyword id="KW-0597">Phosphoprotein</keyword>
<keyword id="KW-1185">Reference proteome</keyword>
<keyword id="KW-0690">Ribosome biogenesis</keyword>
<keyword id="KW-0698">rRNA processing</keyword>
<keyword id="KW-0949">S-adenosyl-L-methionine</keyword>
<keyword id="KW-0808">Transferase</keyword>